<comment type="function">
    <text evidence="1">Effector proteins function to alter host cell physiology and promote bacterial survival in host tissues. This protease targets the host cell ubiquitin pathway by acting as a deubiquitinase in infected host cells (By similarity).</text>
</comment>
<comment type="subcellular location">
    <subcellularLocation>
        <location evidence="1">Secreted</location>
    </subcellularLocation>
    <subcellularLocation>
        <location evidence="1">Host cytoplasm</location>
    </subcellularLocation>
    <text evidence="1">Secreted via type III secretion system 2 (SPI-2 T3SS), and delivered into the host cytoplasm. In phagocytic cells localizes to the Salmonella-containing vacuole (SCV). In epithelial cells localizes to the Salmonella-containing vacuole (SCV) and to the Salmonella-induced filaments (Sifs), which are tubular membrane extensions from the SCV that are formed at late stages of infection (By similarity).</text>
</comment>
<comment type="similarity">
    <text evidence="2">Belongs to the peptidase C79 family.</text>
</comment>
<keyword id="KW-1035">Host cytoplasm</keyword>
<keyword id="KW-0378">Hydrolase</keyword>
<keyword id="KW-0645">Protease</keyword>
<keyword id="KW-0964">Secreted</keyword>
<keyword id="KW-0788">Thiol protease</keyword>
<keyword id="KW-0843">Virulence</keyword>
<organism>
    <name type="scientific">Salmonella paratyphi B (strain ATCC BAA-1250 / SPB7)</name>
    <dbReference type="NCBI Taxonomy" id="1016998"/>
    <lineage>
        <taxon>Bacteria</taxon>
        <taxon>Pseudomonadati</taxon>
        <taxon>Pseudomonadota</taxon>
        <taxon>Gammaproteobacteria</taxon>
        <taxon>Enterobacterales</taxon>
        <taxon>Enterobacteriaceae</taxon>
        <taxon>Salmonella</taxon>
    </lineage>
</organism>
<sequence length="340" mass="38120">MNICVNSLYRLSTPQFHSLYSEDVSDEALALLIGEVENGNQNCIDLLCNLALRNDDLGHKVEKLLFDLFSGKRSGSPDIDKKINQACLVLHQIANNDITKDNTEWKKLHAPSRLLYMAGSATTDLSKKIGIAHKIMGDQFAQTDQEQVGVENLWCGARMLSSDELAAATQGLVQESPLLSVNYPIGLIHPTTKENILSTQLLEKIAQSGLSHNEVFLVNTGDHWLLCLFYKLAEKIKCLIFNTYYDLNENTKQEIIEAAKIAGISESDEVNFIEMNLQNNVPNGCGLFCYHTIQLLSNAGQNDPVTTLREFAEKFLTLSVEEQALFNTQTRRQIYEYSLQ</sequence>
<feature type="chain" id="PRO_0000323573" description="Deubiquitinase SseL">
    <location>
        <begin position="1"/>
        <end position="340"/>
    </location>
</feature>
<feature type="active site" evidence="1">
    <location>
        <position position="223"/>
    </location>
</feature>
<feature type="active site" description="Nucleophile" evidence="1">
    <location>
        <position position="285"/>
    </location>
</feature>
<reference key="1">
    <citation type="submission" date="2007-11" db="EMBL/GenBank/DDBJ databases">
        <authorList>
            <consortium name="The Salmonella enterica serovar Paratyphi B Genome Sequencing Project"/>
            <person name="McClelland M."/>
            <person name="Sanderson E.K."/>
            <person name="Porwollik S."/>
            <person name="Spieth J."/>
            <person name="Clifton W.S."/>
            <person name="Fulton R."/>
            <person name="Cordes M."/>
            <person name="Wollam A."/>
            <person name="Shah N."/>
            <person name="Pepin K."/>
            <person name="Bhonagiri V."/>
            <person name="Nash W."/>
            <person name="Johnson M."/>
            <person name="Thiruvilangam P."/>
            <person name="Wilson R."/>
        </authorList>
    </citation>
    <scope>NUCLEOTIDE SEQUENCE [LARGE SCALE GENOMIC DNA]</scope>
    <source>
        <strain>ATCC BAA-1250 / SPB7</strain>
    </source>
</reference>
<dbReference type="EC" id="3.4.22.-"/>
<dbReference type="EMBL" id="CP000886">
    <property type="protein sequence ID" value="ABX66122.1"/>
    <property type="molecule type" value="Genomic_DNA"/>
</dbReference>
<dbReference type="RefSeq" id="WP_001017732.1">
    <property type="nucleotide sequence ID" value="NC_010102.1"/>
</dbReference>
<dbReference type="SMR" id="A9N5C6"/>
<dbReference type="KEGG" id="spq:SPAB_00696"/>
<dbReference type="PATRIC" id="fig|1016998.12.peg.655"/>
<dbReference type="HOGENOM" id="CLU_069513_0_0_6"/>
<dbReference type="BioCyc" id="SENT1016998:SPAB_RS02895-MONOMER"/>
<dbReference type="Proteomes" id="UP000008556">
    <property type="component" value="Chromosome"/>
</dbReference>
<dbReference type="GO" id="GO:0005576">
    <property type="term" value="C:extracellular region"/>
    <property type="evidence" value="ECO:0007669"/>
    <property type="project" value="UniProtKB-SubCell"/>
</dbReference>
<dbReference type="GO" id="GO:0030430">
    <property type="term" value="C:host cell cytoplasm"/>
    <property type="evidence" value="ECO:0007669"/>
    <property type="project" value="UniProtKB-SubCell"/>
</dbReference>
<dbReference type="GO" id="GO:0008234">
    <property type="term" value="F:cysteine-type peptidase activity"/>
    <property type="evidence" value="ECO:0007669"/>
    <property type="project" value="UniProtKB-KW"/>
</dbReference>
<dbReference type="GO" id="GO:0006508">
    <property type="term" value="P:proteolysis"/>
    <property type="evidence" value="ECO:0007669"/>
    <property type="project" value="UniProtKB-KW"/>
</dbReference>
<dbReference type="InterPro" id="IPR054329">
    <property type="entry name" value="ElaD/SseL-like_N"/>
</dbReference>
<dbReference type="InterPro" id="IPR054328">
    <property type="entry name" value="SseL-like_C"/>
</dbReference>
<dbReference type="NCBIfam" id="NF008812">
    <property type="entry name" value="PRK11836.1"/>
    <property type="match status" value="1"/>
</dbReference>
<dbReference type="NCBIfam" id="NF011421">
    <property type="entry name" value="PRK14848.1"/>
    <property type="match status" value="1"/>
</dbReference>
<dbReference type="Pfam" id="PF22102">
    <property type="entry name" value="ElaD-SseL-like_C"/>
    <property type="match status" value="1"/>
</dbReference>
<dbReference type="Pfam" id="PF22103">
    <property type="entry name" value="ElaD_SseL-like_N"/>
    <property type="match status" value="1"/>
</dbReference>
<proteinExistence type="inferred from homology"/>
<evidence type="ECO:0000250" key="1"/>
<evidence type="ECO:0000305" key="2"/>
<accession>A9N5C6</accession>
<name>SSEL_SALPB</name>
<protein>
    <recommendedName>
        <fullName>Deubiquitinase SseL</fullName>
        <ecNumber>3.4.22.-</ecNumber>
    </recommendedName>
    <alternativeName>
        <fullName>Deubiquitinating enzyme</fullName>
        <shortName>DUB</shortName>
    </alternativeName>
    <alternativeName>
        <fullName>Deubiquitinating protease</fullName>
    </alternativeName>
    <alternativeName>
        <fullName>Salmonella secreted effector L</fullName>
    </alternativeName>
</protein>
<gene>
    <name type="primary">sseL</name>
    <name type="ordered locus">SPAB_00696</name>
</gene>